<reference key="1">
    <citation type="journal article" date="2016" name="Proc. Natl. Acad. Sci. U.S.A.">
        <title>The biosynthetic pathway of the nonsugar, high-intensity sweetener mogroside V from Siraitia grosvenorii.</title>
        <authorList>
            <person name="Itkin M."/>
            <person name="Davidovich-Rikanati R."/>
            <person name="Cohen S."/>
            <person name="Portnoy V."/>
            <person name="Doron-Faigenboim A."/>
            <person name="Oren E."/>
            <person name="Freilich S."/>
            <person name="Tzuri G."/>
            <person name="Baranes N."/>
            <person name="Shen S."/>
            <person name="Petreikov M."/>
            <person name="Sertchook R."/>
            <person name="Ben-Dor S."/>
            <person name="Gottlieb H."/>
            <person name="Hernandez A."/>
            <person name="Nelson D.R."/>
            <person name="Paris H.S."/>
            <person name="Tadmor Y."/>
            <person name="Burger Y."/>
            <person name="Lewinsohn E."/>
            <person name="Katzir N."/>
            <person name="Schaffer A."/>
        </authorList>
    </citation>
    <scope>NUCLEOTIDE SEQUENCE</scope>
    <scope>FUNCTION</scope>
    <scope>CATALYTIC ACTIVITY</scope>
    <scope>PATHWAY</scope>
    <scope>TISSUE SPECIFICITY</scope>
    <scope>GENE FAMILY</scope>
    <scope>NOMENCLATURE</scope>
</reference>
<proteinExistence type="evidence at protein level"/>
<gene>
    <name evidence="4" type="primary">UGT94-289-1</name>
</gene>
<accession>P0DO71</accession>
<organism>
    <name type="scientific">Siraitia grosvenorii</name>
    <name type="common">Monk's fruit</name>
    <name type="synonym">Luo han guo</name>
    <dbReference type="NCBI Taxonomy" id="190515"/>
    <lineage>
        <taxon>Eukaryota</taxon>
        <taxon>Viridiplantae</taxon>
        <taxon>Streptophyta</taxon>
        <taxon>Embryophyta</taxon>
        <taxon>Tracheophyta</taxon>
        <taxon>Spermatophyta</taxon>
        <taxon>Magnoliopsida</taxon>
        <taxon>eudicotyledons</taxon>
        <taxon>Gunneridae</taxon>
        <taxon>Pentapetalae</taxon>
        <taxon>rosids</taxon>
        <taxon>fabids</taxon>
        <taxon>Cucurbitales</taxon>
        <taxon>Cucurbitaceae</taxon>
        <taxon>Siraitieae</taxon>
        <taxon>Siraitia</taxon>
    </lineage>
</organism>
<comment type="function">
    <text evidence="3">UDP-glycosyltransferase involved in the biosynthesis of cucurbitacin and mogroside tetracyclic triterpene natural products (e.g. siamenoside I and mogrosides IV, V and VI) (PubMed:27821754). Cucurbitacins have cytotoxic properties and exhibit deterrent taste as a defense barrier against herbivores (PubMed:27821754). Mogrosides are nonsugar highly oxygenated compounds used as high-intensity zero-calorie sweeteners; they also possess pharmacological properties such as regulating immunity, lowering blood sugar and lipid levels, protecting the liver, and acting as antioxidants and antitumor agents (PubMed:27821754). Catalyzes the branched glucosylations of mogroside II-E, mogroside III and mogroside IV (PubMed:27821754).</text>
</comment>
<comment type="catalytic activity">
    <reaction evidence="3">
        <text>mogroside IIE + UDP-alpha-D-glucose = mogroside IIIX + UDP + H(+)</text>
        <dbReference type="Rhea" id="RHEA:80187"/>
        <dbReference type="ChEBI" id="CHEBI:15378"/>
        <dbReference type="ChEBI" id="CHEBI:58223"/>
        <dbReference type="ChEBI" id="CHEBI:58885"/>
        <dbReference type="ChEBI" id="CHEBI:145198"/>
        <dbReference type="ChEBI" id="CHEBI:229952"/>
    </reaction>
    <physiologicalReaction direction="left-to-right" evidence="3">
        <dbReference type="Rhea" id="RHEA:80188"/>
    </physiologicalReaction>
</comment>
<comment type="catalytic activity">
    <reaction evidence="3">
        <text>mogroside III + UDP-alpha-D-glucose = mogroside IV + UDP + H(+)</text>
        <dbReference type="Rhea" id="RHEA:81923"/>
        <dbReference type="ChEBI" id="CHEBI:15378"/>
        <dbReference type="ChEBI" id="CHEBI:58223"/>
        <dbReference type="ChEBI" id="CHEBI:58885"/>
        <dbReference type="ChEBI" id="CHEBI:230514"/>
        <dbReference type="ChEBI" id="CHEBI:232044"/>
    </reaction>
    <physiologicalReaction direction="left-to-right" evidence="3">
        <dbReference type="Rhea" id="RHEA:81924"/>
    </physiologicalReaction>
</comment>
<comment type="catalytic activity">
    <reaction evidence="3">
        <text>mogroside III + UDP-alpha-D-glucose = siamenoside I + UDP + H(+)</text>
        <dbReference type="Rhea" id="RHEA:81927"/>
        <dbReference type="ChEBI" id="CHEBI:15378"/>
        <dbReference type="ChEBI" id="CHEBI:58223"/>
        <dbReference type="ChEBI" id="CHEBI:58885"/>
        <dbReference type="ChEBI" id="CHEBI:228908"/>
        <dbReference type="ChEBI" id="CHEBI:232044"/>
    </reaction>
    <physiologicalReaction direction="left-to-right" evidence="3">
        <dbReference type="Rhea" id="RHEA:81928"/>
    </physiologicalReaction>
</comment>
<comment type="catalytic activity">
    <reaction evidence="3">
        <text>mogroside IV + UDP-alpha-D-glucose = mogroside V + UDP + H(+)</text>
        <dbReference type="Rhea" id="RHEA:81935"/>
        <dbReference type="ChEBI" id="CHEBI:15378"/>
        <dbReference type="ChEBI" id="CHEBI:58223"/>
        <dbReference type="ChEBI" id="CHEBI:58885"/>
        <dbReference type="ChEBI" id="CHEBI:229959"/>
        <dbReference type="ChEBI" id="CHEBI:230514"/>
    </reaction>
    <physiologicalReaction direction="left-to-right" evidence="3">
        <dbReference type="Rhea" id="RHEA:81936"/>
    </physiologicalReaction>
</comment>
<comment type="pathway">
    <text evidence="3">Secondary metabolite biosynthesis; terpenoid biosynthesis.</text>
</comment>
<comment type="tissue specificity">
    <text evidence="3">Highly expressed in mature fruits.</text>
</comment>
<comment type="miscellaneous">
    <text evidence="6">Mogrosides, the major active constituents of S.grosvenorii fruits, are a mixture of cucurbitane-type triterpenoid glycosides that have been proven to be powerful and zero-caloric sweeteners and can hence be used as a sucrose substitute for diabetic and obese patients.</text>
</comment>
<comment type="similarity">
    <text evidence="5">Belongs to the UDP-glycosyltransferase family.</text>
</comment>
<evidence type="ECO:0000250" key="1">
    <source>
        <dbReference type="UniProtKB" id="A0A0A1HA03"/>
    </source>
</evidence>
<evidence type="ECO:0000250" key="2">
    <source>
        <dbReference type="UniProtKB" id="K7NBW3"/>
    </source>
</evidence>
<evidence type="ECO:0000269" key="3">
    <source>
    </source>
</evidence>
<evidence type="ECO:0000303" key="4">
    <source>
    </source>
</evidence>
<evidence type="ECO:0000305" key="5"/>
<evidence type="ECO:0000305" key="6">
    <source>
    </source>
</evidence>
<dbReference type="EC" id="2.4.1.-" evidence="3"/>
<dbReference type="SMR" id="P0DO71"/>
<dbReference type="UniPathway" id="UPA00213"/>
<dbReference type="GO" id="GO:0008194">
    <property type="term" value="F:UDP-glycosyltransferase activity"/>
    <property type="evidence" value="ECO:0007669"/>
    <property type="project" value="InterPro"/>
</dbReference>
<dbReference type="GO" id="GO:1901137">
    <property type="term" value="P:carbohydrate derivative biosynthetic process"/>
    <property type="evidence" value="ECO:0007669"/>
    <property type="project" value="UniProtKB-ARBA"/>
</dbReference>
<dbReference type="CDD" id="cd03784">
    <property type="entry name" value="GT1_Gtf-like"/>
    <property type="match status" value="1"/>
</dbReference>
<dbReference type="FunFam" id="3.40.50.2000:FF:000060">
    <property type="entry name" value="Glycosyltransferase"/>
    <property type="match status" value="1"/>
</dbReference>
<dbReference type="Gene3D" id="3.40.50.2000">
    <property type="entry name" value="Glycogen Phosphorylase B"/>
    <property type="match status" value="2"/>
</dbReference>
<dbReference type="InterPro" id="IPR002213">
    <property type="entry name" value="UDP_glucos_trans"/>
</dbReference>
<dbReference type="InterPro" id="IPR035595">
    <property type="entry name" value="UDP_glycos_trans_CS"/>
</dbReference>
<dbReference type="PANTHER" id="PTHR48044">
    <property type="entry name" value="GLYCOSYLTRANSFERASE"/>
    <property type="match status" value="1"/>
</dbReference>
<dbReference type="PANTHER" id="PTHR48044:SF29">
    <property type="entry name" value="GLYCOSYLTRANSFERASE"/>
    <property type="match status" value="1"/>
</dbReference>
<dbReference type="Pfam" id="PF00201">
    <property type="entry name" value="UDPGT"/>
    <property type="match status" value="1"/>
</dbReference>
<dbReference type="SUPFAM" id="SSF53756">
    <property type="entry name" value="UDP-Glycosyltransferase/glycogen phosphorylase"/>
    <property type="match status" value="1"/>
</dbReference>
<protein>
    <recommendedName>
        <fullName evidence="5">Mogroside IIIx synthase</fullName>
        <ecNumber evidence="3">2.4.1.-</ecNumber>
    </recommendedName>
    <alternativeName>
        <fullName evidence="5">Mogroside IV synthase</fullName>
        <ecNumber evidence="3">2.4.1.-</ecNumber>
    </alternativeName>
    <alternativeName>
        <fullName evidence="5">Mogroside V synthase</fullName>
        <ecNumber evidence="3">2.4.1.-</ecNumber>
    </alternativeName>
    <alternativeName>
        <fullName evidence="5">Siamenoside I synthase</fullName>
        <ecNumber evidence="3">2.4.1.-</ecNumber>
    </alternativeName>
    <alternativeName>
        <fullName evidence="4">UDP-glycosyltransferase 94-289-1</fullName>
        <shortName evidence="4">UGT94-289-1</shortName>
    </alternativeName>
</protein>
<name>GT941_SIRGR</name>
<keyword id="KW-0808">Transferase</keyword>
<feature type="chain" id="PRO_0000460923" description="Mogroside IIIx synthase">
    <location>
        <begin position="1"/>
        <end position="453"/>
    </location>
</feature>
<feature type="active site" description="Proton acceptor" evidence="1">
    <location>
        <position position="21"/>
    </location>
</feature>
<feature type="active site" description="Charge relay" evidence="1">
    <location>
        <position position="122"/>
    </location>
</feature>
<feature type="binding site" evidence="2">
    <location>
        <position position="273"/>
    </location>
    <ligand>
        <name>UDP-alpha-D-glucose</name>
        <dbReference type="ChEBI" id="CHEBI:58885"/>
    </ligand>
</feature>
<feature type="binding site" evidence="2">
    <location>
        <position position="336"/>
    </location>
    <ligand>
        <name>UDP-alpha-D-glucose</name>
        <dbReference type="ChEBI" id="CHEBI:58885"/>
    </ligand>
</feature>
<feature type="binding site" evidence="2">
    <location>
        <position position="354"/>
    </location>
    <ligand>
        <name>UDP-alpha-D-glucose</name>
        <dbReference type="ChEBI" id="CHEBI:58885"/>
    </ligand>
</feature>
<feature type="binding site" evidence="2">
    <location>
        <position position="355"/>
    </location>
    <ligand>
        <name>UDP-alpha-D-glucose</name>
        <dbReference type="ChEBI" id="CHEBI:58885"/>
    </ligand>
</feature>
<feature type="binding site" evidence="2">
    <location>
        <position position="356"/>
    </location>
    <ligand>
        <name>UDP-alpha-D-glucose</name>
        <dbReference type="ChEBI" id="CHEBI:58885"/>
    </ligand>
</feature>
<feature type="binding site" evidence="2">
    <location>
        <position position="359"/>
    </location>
    <ligand>
        <name>UDP-alpha-D-glucose</name>
        <dbReference type="ChEBI" id="CHEBI:58885"/>
    </ligand>
</feature>
<feature type="binding site" evidence="2">
    <location>
        <position position="375"/>
    </location>
    <ligand>
        <name>UDP-alpha-D-glucose</name>
        <dbReference type="ChEBI" id="CHEBI:58885"/>
    </ligand>
</feature>
<feature type="binding site" evidence="2">
    <location>
        <position position="376"/>
    </location>
    <ligand>
        <name>UDP-alpha-D-glucose</name>
        <dbReference type="ChEBI" id="CHEBI:58885"/>
    </ligand>
</feature>
<sequence>MDAQRGHTTTILMFPWLGYGHLSAFLELAKSLSRRNFHIYFCSTSVNLDAIKPKLPSSSSSDSIQLVELCLPSSPDQLPPHLHTTNALPPHLMPTLHQAFSMAAQHFAAILHTLAPHLLIYDSFQPWAPQLASSLNIPAINFNTTGASVLTRMLHATHYPSSKFPISEFVLHDYWKAMYSAAGGAVTKKDHKIGETLANCLHASCSVILINSFRELEEKYMDYLSVLLNKKVVPVGPLVYEPNQDGEDEGYSSIKNWLDKKEPSSTVFVSFGSEYFPSKEEMEEIAHGLEASEVHFIWVVRFPQGDNTSAIEDALPKGFLERVGERGMVVKGWAPQAKILKHWSTGGFVSHCGWNSVMESMMFGVPIIGVPMHLDQPFNAGLAEEAGVGVEAKRDPDGKIQRDEVAKLIKEVVVEKTREDVRKKAREMSEILRSKGEEKMDEMVAAISLFLKI</sequence>